<evidence type="ECO:0000250" key="1">
    <source>
        <dbReference type="UniProtKB" id="Q05048"/>
    </source>
</evidence>
<dbReference type="EMBL" id="BC091381">
    <property type="protein sequence ID" value="AAH91381.1"/>
    <property type="molecule type" value="mRNA"/>
</dbReference>
<dbReference type="RefSeq" id="NP_001013179.1">
    <property type="nucleotide sequence ID" value="NM_001013161.2"/>
</dbReference>
<dbReference type="RefSeq" id="NP_001402805.1">
    <property type="nucleotide sequence ID" value="NM_001415876.1"/>
</dbReference>
<dbReference type="RefSeq" id="NP_001402806.1">
    <property type="nucleotide sequence ID" value="NM_001415877.1"/>
</dbReference>
<dbReference type="RefSeq" id="XP_006235743.4">
    <property type="nucleotide sequence ID" value="XM_006235681.4"/>
</dbReference>
<dbReference type="RefSeq" id="XP_006235744.1">
    <property type="nucleotide sequence ID" value="XM_006235682.3"/>
</dbReference>
<dbReference type="RefSeq" id="XP_006235745.1">
    <property type="nucleotide sequence ID" value="XM_006235683.5"/>
</dbReference>
<dbReference type="RefSeq" id="XP_006235746.1">
    <property type="nucleotide sequence ID" value="XM_006235684.2"/>
</dbReference>
<dbReference type="RefSeq" id="XP_006235747.1">
    <property type="nucleotide sequence ID" value="XM_006235685.3"/>
</dbReference>
<dbReference type="RefSeq" id="XP_006235748.1">
    <property type="nucleotide sequence ID" value="XM_006235686.5"/>
</dbReference>
<dbReference type="RefSeq" id="XP_038961074.1">
    <property type="nucleotide sequence ID" value="XM_039105146.2"/>
</dbReference>
<dbReference type="SMR" id="Q5BJQ6"/>
<dbReference type="BioGRID" id="260014">
    <property type="interactions" value="1"/>
</dbReference>
<dbReference type="FunCoup" id="Q5BJQ6">
    <property type="interactions" value="4457"/>
</dbReference>
<dbReference type="IntAct" id="Q5BJQ6">
    <property type="interactions" value="1"/>
</dbReference>
<dbReference type="STRING" id="10116.ENSRNOP00000051976"/>
<dbReference type="PhosphoSitePlus" id="Q5BJQ6"/>
<dbReference type="jPOST" id="Q5BJQ6"/>
<dbReference type="PaxDb" id="10116-ENSRNOP00000051976"/>
<dbReference type="Ensembl" id="ENSRNOT00000055101.3">
    <property type="protein sequence ID" value="ENSRNOP00000051976.2"/>
    <property type="gene ID" value="ENSRNOG00000004775.6"/>
</dbReference>
<dbReference type="GeneID" id="311670"/>
<dbReference type="KEGG" id="rno:311670"/>
<dbReference type="AGR" id="RGD:1309267"/>
<dbReference type="CTD" id="1477"/>
<dbReference type="RGD" id="1309267">
    <property type="gene designation" value="Cstf1"/>
</dbReference>
<dbReference type="eggNOG" id="KOG0640">
    <property type="taxonomic scope" value="Eukaryota"/>
</dbReference>
<dbReference type="GeneTree" id="ENSGT00910000144253"/>
<dbReference type="HOGENOM" id="CLU_041619_0_0_1"/>
<dbReference type="InParanoid" id="Q5BJQ6"/>
<dbReference type="OMA" id="HTEDYVM"/>
<dbReference type="OrthoDB" id="14421at2759"/>
<dbReference type="PhylomeDB" id="Q5BJQ6"/>
<dbReference type="TreeFam" id="TF314234"/>
<dbReference type="Reactome" id="R-RNO-72187">
    <property type="pathway name" value="mRNA 3'-end processing"/>
</dbReference>
<dbReference type="Reactome" id="R-RNO-72203">
    <property type="pathway name" value="Processing of Capped Intron-Containing Pre-mRNA"/>
</dbReference>
<dbReference type="Reactome" id="R-RNO-73856">
    <property type="pathway name" value="RNA Polymerase II Transcription Termination"/>
</dbReference>
<dbReference type="Reactome" id="R-RNO-77595">
    <property type="pathway name" value="Processing of Intronless Pre-mRNAs"/>
</dbReference>
<dbReference type="PRO" id="PR:Q5BJQ6"/>
<dbReference type="Proteomes" id="UP000002494">
    <property type="component" value="Chromosome 3"/>
</dbReference>
<dbReference type="Bgee" id="ENSRNOG00000004775">
    <property type="expression patterns" value="Expressed in testis and 19 other cell types or tissues"/>
</dbReference>
<dbReference type="GO" id="GO:0005848">
    <property type="term" value="C:mRNA cleavage stimulating factor complex"/>
    <property type="evidence" value="ECO:0000318"/>
    <property type="project" value="GO_Central"/>
</dbReference>
<dbReference type="GO" id="GO:0005654">
    <property type="term" value="C:nucleoplasm"/>
    <property type="evidence" value="ECO:0007669"/>
    <property type="project" value="Ensembl"/>
</dbReference>
<dbReference type="GO" id="GO:0031124">
    <property type="term" value="P:mRNA 3'-end processing"/>
    <property type="evidence" value="ECO:0007669"/>
    <property type="project" value="InterPro"/>
</dbReference>
<dbReference type="CDD" id="cd00200">
    <property type="entry name" value="WD40"/>
    <property type="match status" value="1"/>
</dbReference>
<dbReference type="FunFam" id="1.20.960.50:FF:000001">
    <property type="entry name" value="Cleavage stimulation factor subunit 1"/>
    <property type="match status" value="1"/>
</dbReference>
<dbReference type="FunFam" id="2.130.10.10:FF:000064">
    <property type="entry name" value="Cleavage stimulation factor subunit 1"/>
    <property type="match status" value="1"/>
</dbReference>
<dbReference type="FunFam" id="2.130.10.10:FF:000089">
    <property type="entry name" value="Cleavage stimulation factor subunit 1"/>
    <property type="match status" value="1"/>
</dbReference>
<dbReference type="Gene3D" id="1.20.960.50">
    <property type="entry name" value="Cleavage stimulation factor subunit 1, dimerisation domain"/>
    <property type="match status" value="1"/>
</dbReference>
<dbReference type="Gene3D" id="2.130.10.10">
    <property type="entry name" value="YVTN repeat-like/Quinoprotein amine dehydrogenase"/>
    <property type="match status" value="2"/>
</dbReference>
<dbReference type="InterPro" id="IPR044633">
    <property type="entry name" value="CstF1-like"/>
</dbReference>
<dbReference type="InterPro" id="IPR032028">
    <property type="entry name" value="CSTF1_dimer"/>
</dbReference>
<dbReference type="InterPro" id="IPR038184">
    <property type="entry name" value="CSTF1_dimer_sf"/>
</dbReference>
<dbReference type="InterPro" id="IPR015943">
    <property type="entry name" value="WD40/YVTN_repeat-like_dom_sf"/>
</dbReference>
<dbReference type="InterPro" id="IPR019775">
    <property type="entry name" value="WD40_repeat_CS"/>
</dbReference>
<dbReference type="InterPro" id="IPR036322">
    <property type="entry name" value="WD40_repeat_dom_sf"/>
</dbReference>
<dbReference type="InterPro" id="IPR001680">
    <property type="entry name" value="WD40_rpt"/>
</dbReference>
<dbReference type="PANTHER" id="PTHR44133">
    <property type="entry name" value="CLEAVAGE STIMULATION FACTOR SUBUNIT 1"/>
    <property type="match status" value="1"/>
</dbReference>
<dbReference type="PANTHER" id="PTHR44133:SF2">
    <property type="entry name" value="CLEAVAGE STIMULATION FACTOR SUBUNIT 1"/>
    <property type="match status" value="1"/>
</dbReference>
<dbReference type="Pfam" id="PF16699">
    <property type="entry name" value="CSTF1_dimer"/>
    <property type="match status" value="1"/>
</dbReference>
<dbReference type="Pfam" id="PF00400">
    <property type="entry name" value="WD40"/>
    <property type="match status" value="6"/>
</dbReference>
<dbReference type="SMART" id="SM00320">
    <property type="entry name" value="WD40"/>
    <property type="match status" value="6"/>
</dbReference>
<dbReference type="SUPFAM" id="SSF50978">
    <property type="entry name" value="WD40 repeat-like"/>
    <property type="match status" value="1"/>
</dbReference>
<dbReference type="PROSITE" id="PS00678">
    <property type="entry name" value="WD_REPEATS_1"/>
    <property type="match status" value="1"/>
</dbReference>
<dbReference type="PROSITE" id="PS50082">
    <property type="entry name" value="WD_REPEATS_2"/>
    <property type="match status" value="4"/>
</dbReference>
<dbReference type="PROSITE" id="PS50294">
    <property type="entry name" value="WD_REPEATS_REGION"/>
    <property type="match status" value="1"/>
</dbReference>
<gene>
    <name type="primary">Cstf1</name>
</gene>
<feature type="chain" id="PRO_0000050947" description="Cleavage stimulation factor subunit 1">
    <location>
        <begin position="1"/>
        <end position="431"/>
    </location>
</feature>
<feature type="repeat" description="WD 1">
    <location>
        <begin position="106"/>
        <end position="145"/>
    </location>
</feature>
<feature type="repeat" description="WD 2">
    <location>
        <begin position="171"/>
        <end position="210"/>
    </location>
</feature>
<feature type="repeat" description="WD 3">
    <location>
        <begin position="215"/>
        <end position="254"/>
    </location>
</feature>
<feature type="repeat" description="WD 4">
    <location>
        <begin position="260"/>
        <end position="301"/>
    </location>
</feature>
<feature type="repeat" description="WD 5">
    <location>
        <begin position="303"/>
        <end position="343"/>
    </location>
</feature>
<feature type="repeat" description="WD 6">
    <location>
        <begin position="395"/>
        <end position="431"/>
    </location>
</feature>
<accession>Q5BJQ6</accession>
<sequence>MYRTKVGLKDRQQLYKLIISQLLYDGYISIANGLINEIKPQSVCAPSEQLLHLIKLGMENDDTAVQYAIGRSDTVAPGTGIDLEFDADVQTMSPEASEYETCYVTSHKGPCRVATYSRDGQLIATGSADASIKILDTERMLAKSAMPIEVMMNETAQQNMENHPVIRTLYDHVDEVTCLAFHPTEQILASGSRDYTLKLFDYSKPSAKRAFKYIQEAEMLRSISFHPSGDFILVGTQHPTLRLYDINTFQCFVSCNPQDQHTDAICSVNYNPSANMYVTGSKDGCIKLWDGVSNRCITTFEKAHDGAEVCSAIFSKNSKYILSSGKDSVAKLWEISTGRTLVRYTGAGLSGRQVHRTQAVFNHTEDYILLPDERTISLCCWDSRTAERRNLLSLGHNNIVRCIVHSPTNPGFMTCSDDFRARFWYRRSTTD</sequence>
<name>CSTF1_RAT</name>
<comment type="function">
    <text evidence="1">One of the multiple factors required for polyadenylation and 3'-end cleavage of mammalian pre-mRNAs (By similarity). May be responsible for the interaction of CSTF with other factors to form a stable complex on the pre-mRNA (By similarity).</text>
</comment>
<comment type="subunit">
    <text evidence="1">Homodimer (By similarity). The CSTF complex is composed of CSTF1 (50 kDa subunit), CSTF2 (64 kDa subunit) and CSTF3 (77 kDa subunit) (By similarity). Interacts (via repeats WD) directly with CSTF3 (By similarity). Interacts (via repeat WD6) with BARD1 (By similarity). Interacts with ERCC6 (By similarity).</text>
</comment>
<comment type="subcellular location">
    <subcellularLocation>
        <location evidence="1">Nucleus</location>
    </subcellularLocation>
</comment>
<comment type="domain">
    <text evidence="1">N-terminus mediates homodimerization.</text>
</comment>
<proteinExistence type="evidence at transcript level"/>
<reference key="1">
    <citation type="journal article" date="2004" name="Genome Res.">
        <title>The status, quality, and expansion of the NIH full-length cDNA project: the Mammalian Gene Collection (MGC).</title>
        <authorList>
            <consortium name="The MGC Project Team"/>
        </authorList>
    </citation>
    <scope>NUCLEOTIDE SEQUENCE [LARGE SCALE MRNA]</scope>
    <source>
        <tissue>Brain</tissue>
    </source>
</reference>
<organism>
    <name type="scientific">Rattus norvegicus</name>
    <name type="common">Rat</name>
    <dbReference type="NCBI Taxonomy" id="10116"/>
    <lineage>
        <taxon>Eukaryota</taxon>
        <taxon>Metazoa</taxon>
        <taxon>Chordata</taxon>
        <taxon>Craniata</taxon>
        <taxon>Vertebrata</taxon>
        <taxon>Euteleostomi</taxon>
        <taxon>Mammalia</taxon>
        <taxon>Eutheria</taxon>
        <taxon>Euarchontoglires</taxon>
        <taxon>Glires</taxon>
        <taxon>Rodentia</taxon>
        <taxon>Myomorpha</taxon>
        <taxon>Muroidea</taxon>
        <taxon>Muridae</taxon>
        <taxon>Murinae</taxon>
        <taxon>Rattus</taxon>
    </lineage>
</organism>
<keyword id="KW-0507">mRNA processing</keyword>
<keyword id="KW-0539">Nucleus</keyword>
<keyword id="KW-1185">Reference proteome</keyword>
<keyword id="KW-0677">Repeat</keyword>
<keyword id="KW-0853">WD repeat</keyword>
<protein>
    <recommendedName>
        <fullName>Cleavage stimulation factor subunit 1</fullName>
    </recommendedName>
    <alternativeName>
        <fullName>Cleavage stimulation factor 50 kDa subunit</fullName>
        <shortName>CSTF 50 kDa subunit</shortName>
        <shortName>CstF-50</shortName>
    </alternativeName>
</protein>